<accession>A7N178</accession>
<sequence length="634" mass="71948">MSETVSHNKETRGFQSEVKQLLHLMIHSLYSNKEIFLRELISNASDASDKLRFQALSNPDLYEGNADLGVKLAFDESANTLTISDNGIGMSRDDVIEHLGTIAKSGTAEFFSKLSDDQSKDSQLIGQFGVGFYSAFIVADAVTVCTRAAGLAADEAVQWQSAGEGDYTVETITKDSRGTDIVLHMREEGKEFLNEWRLRDVISKYSDHIGIPVSIQTSVRDDEGKETGEKKWEQINKAQALWTRNKSEISEEEYQEFYKHVSHDFADPLTWSHNRVEGKNDYTSLLYIPAKAPWDMMNRDHKSGLKLYVQRVFIMDDAEQFMPSYMRFVRGLIDSNDLPLNVSREILQDNKVTQSLRNACTKRVLTMLDRMAKNDTEKYQSFWKEFGLVMKEGVAEDMANKEKVAGLLRFASTEVDSAEQTVGLASYVERMKEGQDKIYFLTADSYAAAKNSPHLEQFRAKGIEVILMFDRIDEWLMNYLTEFDGKQFQSITKAGLDLSKFEDEAEKEKQKETEEEFKSVVERTQSYLGDRVKEVRTTFKLATTPAVVVTDDFEMGTQMAKLLEAAGQAVPEVKYIFEINPEHALVKRMADEADEEVFGRWVEVLLGQAMLAERGSMEDPSQFVGAINKLLTKV</sequence>
<proteinExistence type="inferred from homology"/>
<evidence type="ECO:0000255" key="1">
    <source>
        <dbReference type="HAMAP-Rule" id="MF_00505"/>
    </source>
</evidence>
<protein>
    <recommendedName>
        <fullName evidence="1">Chaperone protein HtpG</fullName>
    </recommendedName>
    <alternativeName>
        <fullName evidence="1">Heat shock protein HtpG</fullName>
    </alternativeName>
    <alternativeName>
        <fullName evidence="1">High temperature protein G</fullName>
    </alternativeName>
</protein>
<keyword id="KW-0067">ATP-binding</keyword>
<keyword id="KW-0143">Chaperone</keyword>
<keyword id="KW-0963">Cytoplasm</keyword>
<keyword id="KW-0547">Nucleotide-binding</keyword>
<keyword id="KW-0346">Stress response</keyword>
<comment type="function">
    <text evidence="1">Molecular chaperone. Has ATPase activity.</text>
</comment>
<comment type="subunit">
    <text evidence="1">Homodimer.</text>
</comment>
<comment type="subcellular location">
    <subcellularLocation>
        <location evidence="1">Cytoplasm</location>
    </subcellularLocation>
</comment>
<comment type="similarity">
    <text evidence="1">Belongs to the heat shock protein 90 family.</text>
</comment>
<feature type="chain" id="PRO_1000014964" description="Chaperone protein HtpG">
    <location>
        <begin position="1"/>
        <end position="634"/>
    </location>
</feature>
<feature type="region of interest" description="A; substrate-binding" evidence="1">
    <location>
        <begin position="1"/>
        <end position="344"/>
    </location>
</feature>
<feature type="region of interest" description="B" evidence="1">
    <location>
        <begin position="345"/>
        <end position="561"/>
    </location>
</feature>
<feature type="region of interest" description="C" evidence="1">
    <location>
        <begin position="562"/>
        <end position="634"/>
    </location>
</feature>
<organism>
    <name type="scientific">Vibrio campbellii (strain ATCC BAA-1116)</name>
    <dbReference type="NCBI Taxonomy" id="2902295"/>
    <lineage>
        <taxon>Bacteria</taxon>
        <taxon>Pseudomonadati</taxon>
        <taxon>Pseudomonadota</taxon>
        <taxon>Gammaproteobacteria</taxon>
        <taxon>Vibrionales</taxon>
        <taxon>Vibrionaceae</taxon>
        <taxon>Vibrio</taxon>
    </lineage>
</organism>
<gene>
    <name evidence="1" type="primary">htpG</name>
    <name type="ordered locus">VIBHAR_01327</name>
</gene>
<name>HTPG_VIBC1</name>
<dbReference type="EMBL" id="CP000789">
    <property type="protein sequence ID" value="ABU70304.1"/>
    <property type="molecule type" value="Genomic_DNA"/>
</dbReference>
<dbReference type="RefSeq" id="WP_012127249.1">
    <property type="nucleotide sequence ID" value="NC_009783.1"/>
</dbReference>
<dbReference type="SMR" id="A7N178"/>
<dbReference type="KEGG" id="vha:VIBHAR_01327"/>
<dbReference type="PATRIC" id="fig|338187.25.peg.1321"/>
<dbReference type="Proteomes" id="UP000008152">
    <property type="component" value="Chromosome I"/>
</dbReference>
<dbReference type="GO" id="GO:0005737">
    <property type="term" value="C:cytoplasm"/>
    <property type="evidence" value="ECO:0007669"/>
    <property type="project" value="UniProtKB-SubCell"/>
</dbReference>
<dbReference type="GO" id="GO:0005524">
    <property type="term" value="F:ATP binding"/>
    <property type="evidence" value="ECO:0007669"/>
    <property type="project" value="UniProtKB-UniRule"/>
</dbReference>
<dbReference type="GO" id="GO:0016887">
    <property type="term" value="F:ATP hydrolysis activity"/>
    <property type="evidence" value="ECO:0007669"/>
    <property type="project" value="InterPro"/>
</dbReference>
<dbReference type="GO" id="GO:0140662">
    <property type="term" value="F:ATP-dependent protein folding chaperone"/>
    <property type="evidence" value="ECO:0007669"/>
    <property type="project" value="InterPro"/>
</dbReference>
<dbReference type="GO" id="GO:0051082">
    <property type="term" value="F:unfolded protein binding"/>
    <property type="evidence" value="ECO:0007669"/>
    <property type="project" value="UniProtKB-UniRule"/>
</dbReference>
<dbReference type="CDD" id="cd16927">
    <property type="entry name" value="HATPase_Hsp90-like"/>
    <property type="match status" value="1"/>
</dbReference>
<dbReference type="FunFam" id="3.30.230.80:FF:000002">
    <property type="entry name" value="Molecular chaperone HtpG"/>
    <property type="match status" value="1"/>
</dbReference>
<dbReference type="FunFam" id="3.30.565.10:FF:000009">
    <property type="entry name" value="Molecular chaperone HtpG"/>
    <property type="match status" value="1"/>
</dbReference>
<dbReference type="FunFam" id="3.40.50.11260:FF:000002">
    <property type="entry name" value="Molecular chaperone HtpG"/>
    <property type="match status" value="1"/>
</dbReference>
<dbReference type="Gene3D" id="3.30.230.80">
    <property type="match status" value="1"/>
</dbReference>
<dbReference type="Gene3D" id="3.40.50.11260">
    <property type="match status" value="1"/>
</dbReference>
<dbReference type="Gene3D" id="1.20.120.790">
    <property type="entry name" value="Heat shock protein 90, C-terminal domain"/>
    <property type="match status" value="1"/>
</dbReference>
<dbReference type="Gene3D" id="3.30.565.10">
    <property type="entry name" value="Histidine kinase-like ATPase, C-terminal domain"/>
    <property type="match status" value="1"/>
</dbReference>
<dbReference type="HAMAP" id="MF_00505">
    <property type="entry name" value="HSP90"/>
    <property type="match status" value="1"/>
</dbReference>
<dbReference type="InterPro" id="IPR036890">
    <property type="entry name" value="HATPase_C_sf"/>
</dbReference>
<dbReference type="InterPro" id="IPR019805">
    <property type="entry name" value="Heat_shock_protein_90_CS"/>
</dbReference>
<dbReference type="InterPro" id="IPR037196">
    <property type="entry name" value="HSP90_C"/>
</dbReference>
<dbReference type="InterPro" id="IPR001404">
    <property type="entry name" value="Hsp90_fam"/>
</dbReference>
<dbReference type="InterPro" id="IPR020575">
    <property type="entry name" value="Hsp90_N"/>
</dbReference>
<dbReference type="InterPro" id="IPR020568">
    <property type="entry name" value="Ribosomal_Su5_D2-typ_SF"/>
</dbReference>
<dbReference type="NCBIfam" id="NF003555">
    <property type="entry name" value="PRK05218.1"/>
    <property type="match status" value="1"/>
</dbReference>
<dbReference type="PANTHER" id="PTHR11528">
    <property type="entry name" value="HEAT SHOCK PROTEIN 90 FAMILY MEMBER"/>
    <property type="match status" value="1"/>
</dbReference>
<dbReference type="Pfam" id="PF13589">
    <property type="entry name" value="HATPase_c_3"/>
    <property type="match status" value="1"/>
</dbReference>
<dbReference type="Pfam" id="PF00183">
    <property type="entry name" value="HSP90"/>
    <property type="match status" value="1"/>
</dbReference>
<dbReference type="PIRSF" id="PIRSF002583">
    <property type="entry name" value="Hsp90"/>
    <property type="match status" value="1"/>
</dbReference>
<dbReference type="PRINTS" id="PR00775">
    <property type="entry name" value="HEATSHOCK90"/>
</dbReference>
<dbReference type="SMART" id="SM00387">
    <property type="entry name" value="HATPase_c"/>
    <property type="match status" value="1"/>
</dbReference>
<dbReference type="SUPFAM" id="SSF55874">
    <property type="entry name" value="ATPase domain of HSP90 chaperone/DNA topoisomerase II/histidine kinase"/>
    <property type="match status" value="1"/>
</dbReference>
<dbReference type="SUPFAM" id="SSF110942">
    <property type="entry name" value="HSP90 C-terminal domain"/>
    <property type="match status" value="1"/>
</dbReference>
<dbReference type="SUPFAM" id="SSF54211">
    <property type="entry name" value="Ribosomal protein S5 domain 2-like"/>
    <property type="match status" value="1"/>
</dbReference>
<dbReference type="PROSITE" id="PS00298">
    <property type="entry name" value="HSP90"/>
    <property type="match status" value="1"/>
</dbReference>
<reference key="1">
    <citation type="submission" date="2007-08" db="EMBL/GenBank/DDBJ databases">
        <authorList>
            <consortium name="The Vibrio harveyi Genome Sequencing Project"/>
            <person name="Bassler B."/>
            <person name="Clifton S.W."/>
            <person name="Fulton L."/>
            <person name="Delehaunty K."/>
            <person name="Fronick C."/>
            <person name="Harrison M."/>
            <person name="Markivic C."/>
            <person name="Fulton R."/>
            <person name="Tin-Wollam A.-M."/>
            <person name="Shah N."/>
            <person name="Pepin K."/>
            <person name="Nash W."/>
            <person name="Thiruvilangam P."/>
            <person name="Bhonagiri V."/>
            <person name="Waters C."/>
            <person name="Tu K.C."/>
            <person name="Irgon J."/>
            <person name="Wilson R.K."/>
        </authorList>
    </citation>
    <scope>NUCLEOTIDE SEQUENCE [LARGE SCALE GENOMIC DNA]</scope>
    <source>
        <strain>ATCC BAA-1116 / BB120</strain>
    </source>
</reference>